<dbReference type="EMBL" id="CP000075">
    <property type="protein sequence ID" value="AAY36865.1"/>
    <property type="molecule type" value="Genomic_DNA"/>
</dbReference>
<dbReference type="RefSeq" id="WP_003405868.1">
    <property type="nucleotide sequence ID" value="NC_007005.1"/>
</dbReference>
<dbReference type="RefSeq" id="YP_234903.1">
    <property type="nucleotide sequence ID" value="NC_007005.1"/>
</dbReference>
<dbReference type="SMR" id="Q4ZVF7"/>
<dbReference type="STRING" id="205918.Psyr_1818"/>
<dbReference type="KEGG" id="psb:Psyr_1818"/>
<dbReference type="PATRIC" id="fig|205918.7.peg.1862"/>
<dbReference type="eggNOG" id="COG3115">
    <property type="taxonomic scope" value="Bacteria"/>
</dbReference>
<dbReference type="HOGENOM" id="CLU_030174_0_1_6"/>
<dbReference type="OrthoDB" id="7054914at2"/>
<dbReference type="Proteomes" id="UP000000426">
    <property type="component" value="Chromosome"/>
</dbReference>
<dbReference type="GO" id="GO:0032153">
    <property type="term" value="C:cell division site"/>
    <property type="evidence" value="ECO:0007669"/>
    <property type="project" value="UniProtKB-UniRule"/>
</dbReference>
<dbReference type="GO" id="GO:0005886">
    <property type="term" value="C:plasma membrane"/>
    <property type="evidence" value="ECO:0007669"/>
    <property type="project" value="UniProtKB-SubCell"/>
</dbReference>
<dbReference type="GO" id="GO:0000917">
    <property type="term" value="P:division septum assembly"/>
    <property type="evidence" value="ECO:0007669"/>
    <property type="project" value="TreeGrafter"/>
</dbReference>
<dbReference type="GO" id="GO:0043093">
    <property type="term" value="P:FtsZ-dependent cytokinesis"/>
    <property type="evidence" value="ECO:0007669"/>
    <property type="project" value="UniProtKB-UniRule"/>
</dbReference>
<dbReference type="Gene3D" id="3.30.1400.10">
    <property type="entry name" value="ZipA, C-terminal FtsZ-binding domain"/>
    <property type="match status" value="1"/>
</dbReference>
<dbReference type="HAMAP" id="MF_00509">
    <property type="entry name" value="ZipA"/>
    <property type="match status" value="1"/>
</dbReference>
<dbReference type="InterPro" id="IPR011919">
    <property type="entry name" value="Cell_div_ZipA"/>
</dbReference>
<dbReference type="InterPro" id="IPR007449">
    <property type="entry name" value="ZipA_FtsZ-bd_C"/>
</dbReference>
<dbReference type="InterPro" id="IPR036765">
    <property type="entry name" value="ZipA_FtsZ-bd_C_sf"/>
</dbReference>
<dbReference type="NCBIfam" id="TIGR02205">
    <property type="entry name" value="septum_zipA"/>
    <property type="match status" value="1"/>
</dbReference>
<dbReference type="PANTHER" id="PTHR38685">
    <property type="entry name" value="CELL DIVISION PROTEIN ZIPA"/>
    <property type="match status" value="1"/>
</dbReference>
<dbReference type="PANTHER" id="PTHR38685:SF1">
    <property type="entry name" value="CELL DIVISION PROTEIN ZIPA"/>
    <property type="match status" value="1"/>
</dbReference>
<dbReference type="Pfam" id="PF04354">
    <property type="entry name" value="ZipA_C"/>
    <property type="match status" value="1"/>
</dbReference>
<dbReference type="SMART" id="SM00771">
    <property type="entry name" value="ZipA_C"/>
    <property type="match status" value="1"/>
</dbReference>
<dbReference type="SUPFAM" id="SSF64383">
    <property type="entry name" value="Cell-division protein ZipA, C-terminal domain"/>
    <property type="match status" value="1"/>
</dbReference>
<reference key="1">
    <citation type="journal article" date="2005" name="Proc. Natl. Acad. Sci. U.S.A.">
        <title>Comparison of the complete genome sequences of Pseudomonas syringae pv. syringae B728a and pv. tomato DC3000.</title>
        <authorList>
            <person name="Feil H."/>
            <person name="Feil W.S."/>
            <person name="Chain P."/>
            <person name="Larimer F."/>
            <person name="Dibartolo G."/>
            <person name="Copeland A."/>
            <person name="Lykidis A."/>
            <person name="Trong S."/>
            <person name="Nolan M."/>
            <person name="Goltsman E."/>
            <person name="Thiel J."/>
            <person name="Malfatti S."/>
            <person name="Loper J.E."/>
            <person name="Lapidus A."/>
            <person name="Detter J.C."/>
            <person name="Land M."/>
            <person name="Richardson P.M."/>
            <person name="Kyrpides N.C."/>
            <person name="Ivanova N."/>
            <person name="Lindow S.E."/>
        </authorList>
    </citation>
    <scope>NUCLEOTIDE SEQUENCE [LARGE SCALE GENOMIC DNA]</scope>
    <source>
        <strain>B728a</strain>
    </source>
</reference>
<proteinExistence type="inferred from homology"/>
<protein>
    <recommendedName>
        <fullName evidence="1">Cell division protein ZipA</fullName>
    </recommendedName>
</protein>
<feature type="chain" id="PRO_0000237132" description="Cell division protein ZipA">
    <location>
        <begin position="1"/>
        <end position="287"/>
    </location>
</feature>
<feature type="topological domain" description="Periplasmic" evidence="1">
    <location>
        <position position="1"/>
    </location>
</feature>
<feature type="transmembrane region" description="Helical" evidence="1">
    <location>
        <begin position="2"/>
        <end position="22"/>
    </location>
</feature>
<feature type="topological domain" description="Cytoplasmic" evidence="1">
    <location>
        <begin position="23"/>
        <end position="287"/>
    </location>
</feature>
<feature type="region of interest" description="Disordered" evidence="2">
    <location>
        <begin position="48"/>
        <end position="140"/>
    </location>
</feature>
<feature type="compositionally biased region" description="Basic and acidic residues" evidence="2">
    <location>
        <begin position="64"/>
        <end position="77"/>
    </location>
</feature>
<feature type="compositionally biased region" description="Basic and acidic residues" evidence="2">
    <location>
        <begin position="85"/>
        <end position="104"/>
    </location>
</feature>
<feature type="compositionally biased region" description="Basic and acidic residues" evidence="2">
    <location>
        <begin position="121"/>
        <end position="140"/>
    </location>
</feature>
<sequence length="287" mass="32412">MEIGLREWLIVIGIIVIAGILFDGWRRMRGSKGKLKFRLDRSFSNLPDEEETTSAEVLGPPRVLDTHKEPQLDEHDLPSMSASPREGKRSNSDKRSDKKRKDEPQQGDLNLDLDGPSLFTGRDDDFPDDKPTQRITEDKDLPPVEEVLVISVISRSEGGFKGPALLQNILESGLRFGEMDIFHRHESMAGNGEVLFSMANAVKPGVFDLDDIDHFSTRAVSFFLGLPGPRHPKQAFDVMVAAARKLAHELDGELKDDQRSVMTAQTIEHYRQRIVEFERRALTQRRG</sequence>
<evidence type="ECO:0000255" key="1">
    <source>
        <dbReference type="HAMAP-Rule" id="MF_00509"/>
    </source>
</evidence>
<evidence type="ECO:0000256" key="2">
    <source>
        <dbReference type="SAM" id="MobiDB-lite"/>
    </source>
</evidence>
<keyword id="KW-0131">Cell cycle</keyword>
<keyword id="KW-0132">Cell division</keyword>
<keyword id="KW-0997">Cell inner membrane</keyword>
<keyword id="KW-1003">Cell membrane</keyword>
<keyword id="KW-0472">Membrane</keyword>
<keyword id="KW-0812">Transmembrane</keyword>
<keyword id="KW-1133">Transmembrane helix</keyword>
<name>ZIPA_PSEU2</name>
<organism>
    <name type="scientific">Pseudomonas syringae pv. syringae (strain B728a)</name>
    <dbReference type="NCBI Taxonomy" id="205918"/>
    <lineage>
        <taxon>Bacteria</taxon>
        <taxon>Pseudomonadati</taxon>
        <taxon>Pseudomonadota</taxon>
        <taxon>Gammaproteobacteria</taxon>
        <taxon>Pseudomonadales</taxon>
        <taxon>Pseudomonadaceae</taxon>
        <taxon>Pseudomonas</taxon>
        <taxon>Pseudomonas syringae</taxon>
    </lineage>
</organism>
<comment type="function">
    <text evidence="1">Essential cell division protein that stabilizes the FtsZ protofilaments by cross-linking them and that serves as a cytoplasmic membrane anchor for the Z ring. Also required for the recruitment to the septal ring of downstream cell division proteins.</text>
</comment>
<comment type="subunit">
    <text evidence="1">Interacts with FtsZ via their C-terminal domains.</text>
</comment>
<comment type="subcellular location">
    <subcellularLocation>
        <location evidence="1">Cell inner membrane</location>
        <topology evidence="1">Single-pass type I membrane protein</topology>
    </subcellularLocation>
    <text evidence="1">Localizes to the Z ring in an FtsZ-dependent manner.</text>
</comment>
<comment type="similarity">
    <text evidence="1">Belongs to the ZipA family.</text>
</comment>
<gene>
    <name evidence="1" type="primary">zipA</name>
    <name type="ordered locus">Psyr_1818</name>
</gene>
<accession>Q4ZVF7</accession>